<organism evidence="19">
    <name type="scientific">Homo sapiens</name>
    <name type="common">Human</name>
    <dbReference type="NCBI Taxonomy" id="9606"/>
    <lineage>
        <taxon>Eukaryota</taxon>
        <taxon>Metazoa</taxon>
        <taxon>Chordata</taxon>
        <taxon>Craniata</taxon>
        <taxon>Vertebrata</taxon>
        <taxon>Euteleostomi</taxon>
        <taxon>Mammalia</taxon>
        <taxon>Eutheria</taxon>
        <taxon>Euarchontoglires</taxon>
        <taxon>Primates</taxon>
        <taxon>Haplorrhini</taxon>
        <taxon>Catarrhini</taxon>
        <taxon>Hominidae</taxon>
        <taxon>Homo</taxon>
    </lineage>
</organism>
<keyword id="KW-0002">3D-structure</keyword>
<keyword id="KW-0007">Acetylation</keyword>
<keyword id="KW-0025">Alternative splicing</keyword>
<keyword id="KW-0106">Calcium</keyword>
<keyword id="KW-0225">Disease variant</keyword>
<keyword id="KW-0988">Intrahepatic cholestasis</keyword>
<keyword id="KW-0472">Membrane</keyword>
<keyword id="KW-0479">Metal-binding</keyword>
<keyword id="KW-0488">Methylation</keyword>
<keyword id="KW-0496">Mitochondrion</keyword>
<keyword id="KW-0999">Mitochondrion inner membrane</keyword>
<keyword id="KW-0597">Phosphoprotein</keyword>
<keyword id="KW-1267">Proteomics identification</keyword>
<keyword id="KW-1185">Reference proteome</keyword>
<keyword id="KW-0677">Repeat</keyword>
<keyword id="KW-0812">Transmembrane</keyword>
<keyword id="KW-1133">Transmembrane helix</keyword>
<keyword id="KW-0813">Transport</keyword>
<evidence type="ECO:0000250" key="1">
    <source>
        <dbReference type="UniProtKB" id="F1LZW6"/>
    </source>
</evidence>
<evidence type="ECO:0000250" key="2">
    <source>
        <dbReference type="UniProtKB" id="O75746"/>
    </source>
</evidence>
<evidence type="ECO:0000250" key="3">
    <source>
        <dbReference type="UniProtKB" id="Q9QXX4"/>
    </source>
</evidence>
<evidence type="ECO:0000255" key="4">
    <source>
        <dbReference type="PROSITE-ProRule" id="PRU00282"/>
    </source>
</evidence>
<evidence type="ECO:0000255" key="5">
    <source>
        <dbReference type="PROSITE-ProRule" id="PRU00448"/>
    </source>
</evidence>
<evidence type="ECO:0000269" key="6">
    <source>
    </source>
</evidence>
<evidence type="ECO:0000269" key="7">
    <source>
    </source>
</evidence>
<evidence type="ECO:0000269" key="8">
    <source>
    </source>
</evidence>
<evidence type="ECO:0000269" key="9">
    <source>
    </source>
</evidence>
<evidence type="ECO:0000269" key="10">
    <source>
    </source>
</evidence>
<evidence type="ECO:0000269" key="11">
    <source>
    </source>
</evidence>
<evidence type="ECO:0000269" key="12">
    <source>
    </source>
</evidence>
<evidence type="ECO:0000303" key="13">
    <source>
    </source>
</evidence>
<evidence type="ECO:0000303" key="14">
    <source>
    </source>
</evidence>
<evidence type="ECO:0000303" key="15">
    <source>
    </source>
</evidence>
<evidence type="ECO:0000305" key="16"/>
<evidence type="ECO:0000305" key="17">
    <source>
    </source>
</evidence>
<evidence type="ECO:0000312" key="18">
    <source>
        <dbReference type="HGNC" id="HGNC:10983"/>
    </source>
</evidence>
<evidence type="ECO:0000312" key="19">
    <source>
        <dbReference type="Proteomes" id="UP000005640"/>
    </source>
</evidence>
<evidence type="ECO:0007744" key="20">
    <source>
        <dbReference type="PDB" id="4P5W"/>
    </source>
</evidence>
<evidence type="ECO:0007744" key="21">
    <source>
    </source>
</evidence>
<evidence type="ECO:0007744" key="22">
    <source>
    </source>
</evidence>
<evidence type="ECO:0007744" key="23">
    <source>
    </source>
</evidence>
<evidence type="ECO:0007744" key="24">
    <source>
    </source>
</evidence>
<evidence type="ECO:0007829" key="25">
    <source>
        <dbReference type="PDB" id="4P5W"/>
    </source>
</evidence>
<dbReference type="EMBL" id="AF118838">
    <property type="protein sequence ID" value="AAD38501.1"/>
    <property type="molecule type" value="mRNA"/>
</dbReference>
<dbReference type="EMBL" id="Y17571">
    <property type="protein sequence ID" value="CAB62206.1"/>
    <property type="molecule type" value="mRNA"/>
</dbReference>
<dbReference type="EMBL" id="AJ496569">
    <property type="protein sequence ID" value="CAD43091.1"/>
    <property type="molecule type" value="mRNA"/>
</dbReference>
<dbReference type="EMBL" id="AC002540">
    <property type="protein sequence ID" value="AAB70112.1"/>
    <property type="status" value="ALT_SEQ"/>
    <property type="molecule type" value="Genomic_DNA"/>
</dbReference>
<dbReference type="EMBL" id="AC002450">
    <property type="protein sequence ID" value="AAB67049.1"/>
    <property type="status" value="ALT_SEQ"/>
    <property type="molecule type" value="Genomic_DNA"/>
</dbReference>
<dbReference type="EMBL" id="AC004458">
    <property type="status" value="NOT_ANNOTATED_CDS"/>
    <property type="molecule type" value="Genomic_DNA"/>
</dbReference>
<dbReference type="EMBL" id="AC084368">
    <property type="status" value="NOT_ANNOTATED_CDS"/>
    <property type="molecule type" value="Genomic_DNA"/>
</dbReference>
<dbReference type="EMBL" id="AC096775">
    <property type="status" value="NOT_ANNOTATED_CDS"/>
    <property type="molecule type" value="Genomic_DNA"/>
</dbReference>
<dbReference type="EMBL" id="CH471091">
    <property type="protein sequence ID" value="EAW76748.1"/>
    <property type="molecule type" value="Genomic_DNA"/>
</dbReference>
<dbReference type="EMBL" id="BC006566">
    <property type="protein sequence ID" value="AAH06566.1"/>
    <property type="molecule type" value="mRNA"/>
</dbReference>
<dbReference type="EMBL" id="AH009104">
    <property type="protein sequence ID" value="AAF28473.1"/>
    <property type="molecule type" value="Genomic_DNA"/>
</dbReference>
<dbReference type="CCDS" id="CCDS55130.1">
    <molecule id="Q9UJS0-2"/>
</dbReference>
<dbReference type="CCDS" id="CCDS5645.1">
    <molecule id="Q9UJS0-1"/>
</dbReference>
<dbReference type="RefSeq" id="NP_001153682.1">
    <molecule id="Q9UJS0-2"/>
    <property type="nucleotide sequence ID" value="NM_001160210.2"/>
</dbReference>
<dbReference type="RefSeq" id="NP_055066.1">
    <molecule id="Q9UJS0-1"/>
    <property type="nucleotide sequence ID" value="NM_014251.3"/>
</dbReference>
<dbReference type="PDB" id="4P5W">
    <property type="method" value="X-ray"/>
    <property type="resolution" value="2.40 A"/>
    <property type="chains" value="A/B=2-319, A/B=612-675"/>
</dbReference>
<dbReference type="PDBsum" id="4P5W"/>
<dbReference type="SMR" id="Q9UJS0"/>
<dbReference type="BioGRID" id="115467">
    <property type="interactions" value="318"/>
</dbReference>
<dbReference type="FunCoup" id="Q9UJS0">
    <property type="interactions" value="1639"/>
</dbReference>
<dbReference type="IntAct" id="Q9UJS0">
    <property type="interactions" value="113"/>
</dbReference>
<dbReference type="MINT" id="Q9UJS0"/>
<dbReference type="STRING" id="9606.ENSP00000400101"/>
<dbReference type="DrugBank" id="DB00128">
    <property type="generic name" value="Aspartic acid"/>
</dbReference>
<dbReference type="DrugCentral" id="Q9UJS0"/>
<dbReference type="TCDB" id="2.A.29.14.2">
    <property type="family name" value="the mitochondrial carrier (mc) family"/>
</dbReference>
<dbReference type="GlyCosmos" id="Q9UJS0">
    <property type="glycosylation" value="3 sites, 1 glycan"/>
</dbReference>
<dbReference type="GlyGen" id="Q9UJS0">
    <property type="glycosylation" value="3 sites, 1 O-linked glycan (3 sites)"/>
</dbReference>
<dbReference type="iPTMnet" id="Q9UJS0"/>
<dbReference type="MetOSite" id="Q9UJS0"/>
<dbReference type="PhosphoSitePlus" id="Q9UJS0"/>
<dbReference type="SwissPalm" id="Q9UJS0"/>
<dbReference type="BioMuta" id="SLC25A13"/>
<dbReference type="DMDM" id="13124095"/>
<dbReference type="jPOST" id="Q9UJS0"/>
<dbReference type="MassIVE" id="Q9UJS0"/>
<dbReference type="PaxDb" id="9606-ENSP00000400101"/>
<dbReference type="PeptideAtlas" id="Q9UJS0"/>
<dbReference type="ProteomicsDB" id="84641">
    <molecule id="Q9UJS0-1"/>
</dbReference>
<dbReference type="ProteomicsDB" id="84642">
    <molecule id="Q9UJS0-2"/>
</dbReference>
<dbReference type="Pumba" id="Q9UJS0"/>
<dbReference type="Antibodypedia" id="15932">
    <property type="antibodies" value="221 antibodies from 31 providers"/>
</dbReference>
<dbReference type="DNASU" id="10165"/>
<dbReference type="Ensembl" id="ENST00000265631.10">
    <molecule id="Q9UJS0-1"/>
    <property type="protein sequence ID" value="ENSP00000265631.6"/>
    <property type="gene ID" value="ENSG00000004864.14"/>
</dbReference>
<dbReference type="Ensembl" id="ENST00000416240.6">
    <molecule id="Q9UJS0-2"/>
    <property type="protein sequence ID" value="ENSP00000400101.2"/>
    <property type="gene ID" value="ENSG00000004864.14"/>
</dbReference>
<dbReference type="GeneID" id="10165"/>
<dbReference type="KEGG" id="hsa:10165"/>
<dbReference type="MANE-Select" id="ENST00000265631.10">
    <property type="protein sequence ID" value="ENSP00000265631.6"/>
    <property type="RefSeq nucleotide sequence ID" value="NM_014251.3"/>
    <property type="RefSeq protein sequence ID" value="NP_055066.1"/>
</dbReference>
<dbReference type="UCSC" id="uc003uof.5">
    <molecule id="Q9UJS0-1"/>
    <property type="organism name" value="human"/>
</dbReference>
<dbReference type="AGR" id="HGNC:10983"/>
<dbReference type="CTD" id="10165"/>
<dbReference type="DisGeNET" id="10165"/>
<dbReference type="GeneCards" id="SLC25A13"/>
<dbReference type="GeneReviews" id="SLC25A13"/>
<dbReference type="HGNC" id="HGNC:10983">
    <property type="gene designation" value="SLC25A13"/>
</dbReference>
<dbReference type="HPA" id="ENSG00000004864">
    <property type="expression patterns" value="Tissue enriched (liver)"/>
</dbReference>
<dbReference type="MalaCards" id="SLC25A13"/>
<dbReference type="MIM" id="603471">
    <property type="type" value="phenotype"/>
</dbReference>
<dbReference type="MIM" id="603859">
    <property type="type" value="gene"/>
</dbReference>
<dbReference type="MIM" id="605814">
    <property type="type" value="phenotype"/>
</dbReference>
<dbReference type="neXtProt" id="NX_Q9UJS0"/>
<dbReference type="OpenTargets" id="ENSG00000004864"/>
<dbReference type="Orphanet" id="247585">
    <property type="disease" value="Citrullinemia type II"/>
</dbReference>
<dbReference type="Orphanet" id="247598">
    <property type="disease" value="Neonatal intrahepatic cholestasis due to citrin deficiency"/>
</dbReference>
<dbReference type="PharmGKB" id="PA35859"/>
<dbReference type="VEuPathDB" id="HostDB:ENSG00000004864"/>
<dbReference type="eggNOG" id="KOG0751">
    <property type="taxonomic scope" value="Eukaryota"/>
</dbReference>
<dbReference type="GeneTree" id="ENSGT00940000159344"/>
<dbReference type="HOGENOM" id="CLU_014931_3_0_1"/>
<dbReference type="InParanoid" id="Q9UJS0"/>
<dbReference type="OMA" id="AEAQRQX"/>
<dbReference type="OrthoDB" id="2161at2759"/>
<dbReference type="PAN-GO" id="Q9UJS0">
    <property type="GO annotations" value="5 GO annotations based on evolutionary models"/>
</dbReference>
<dbReference type="PhylomeDB" id="Q9UJS0"/>
<dbReference type="TreeFam" id="TF313209"/>
<dbReference type="PathwayCommons" id="Q9UJS0"/>
<dbReference type="Reactome" id="R-HSA-1268020">
    <property type="pathway name" value="Mitochondrial protein import"/>
</dbReference>
<dbReference type="Reactome" id="R-HSA-8963693">
    <property type="pathway name" value="Aspartate and asparagine metabolism"/>
</dbReference>
<dbReference type="Reactome" id="R-HSA-9856872">
    <property type="pathway name" value="Malate-aspartate shuttle"/>
</dbReference>
<dbReference type="SignaLink" id="Q9UJS0"/>
<dbReference type="SIGNOR" id="Q9UJS0"/>
<dbReference type="BioGRID-ORCS" id="10165">
    <property type="hits" value="8 hits in 1159 CRISPR screens"/>
</dbReference>
<dbReference type="CD-CODE" id="FB4E32DD">
    <property type="entry name" value="Presynaptic clusters and postsynaptic densities"/>
</dbReference>
<dbReference type="ChiTaRS" id="SLC25A13">
    <property type="organism name" value="human"/>
</dbReference>
<dbReference type="EvolutionaryTrace" id="Q9UJS0"/>
<dbReference type="GenomeRNAi" id="10165"/>
<dbReference type="Pharos" id="Q9UJS0">
    <property type="development level" value="Tbio"/>
</dbReference>
<dbReference type="PRO" id="PR:Q9UJS0"/>
<dbReference type="Proteomes" id="UP000005640">
    <property type="component" value="Chromosome 7"/>
</dbReference>
<dbReference type="RNAct" id="Q9UJS0">
    <property type="molecule type" value="protein"/>
</dbReference>
<dbReference type="Bgee" id="ENSG00000004864">
    <property type="expression patterns" value="Expressed in right lobe of liver and 195 other cell types or tissues"/>
</dbReference>
<dbReference type="ExpressionAtlas" id="Q9UJS0">
    <property type="expression patterns" value="baseline and differential"/>
</dbReference>
<dbReference type="GO" id="GO:0005743">
    <property type="term" value="C:mitochondrial inner membrane"/>
    <property type="evidence" value="ECO:0000314"/>
    <property type="project" value="UniProtKB"/>
</dbReference>
<dbReference type="GO" id="GO:0005739">
    <property type="term" value="C:mitochondrion"/>
    <property type="evidence" value="ECO:0000314"/>
    <property type="project" value="HPA"/>
</dbReference>
<dbReference type="GO" id="GO:0005886">
    <property type="term" value="C:plasma membrane"/>
    <property type="evidence" value="ECO:0000303"/>
    <property type="project" value="UniProtKB"/>
</dbReference>
<dbReference type="GO" id="GO:0000514">
    <property type="term" value="F:3-sulfino-L-alanine: proton, glutamate antiporter activity"/>
    <property type="evidence" value="ECO:0000314"/>
    <property type="project" value="UniProtKB"/>
</dbReference>
<dbReference type="GO" id="GO:0000515">
    <property type="term" value="F:aspartate:glutamate, proton antiporter activity"/>
    <property type="evidence" value="ECO:0000314"/>
    <property type="project" value="UniProtKB"/>
</dbReference>
<dbReference type="GO" id="GO:0005509">
    <property type="term" value="F:calcium ion binding"/>
    <property type="evidence" value="ECO:0000314"/>
    <property type="project" value="UniProtKB"/>
</dbReference>
<dbReference type="GO" id="GO:0042802">
    <property type="term" value="F:identical protein binding"/>
    <property type="evidence" value="ECO:0000314"/>
    <property type="project" value="UniProtKB"/>
</dbReference>
<dbReference type="GO" id="GO:0015183">
    <property type="term" value="F:L-aspartate transmembrane transporter activity"/>
    <property type="evidence" value="ECO:0000318"/>
    <property type="project" value="GO_Central"/>
</dbReference>
<dbReference type="GO" id="GO:0005313">
    <property type="term" value="F:L-glutamate transmembrane transporter activity"/>
    <property type="evidence" value="ECO:0000318"/>
    <property type="project" value="GO_Central"/>
</dbReference>
<dbReference type="GO" id="GO:0015810">
    <property type="term" value="P:aspartate transmembrane transport"/>
    <property type="evidence" value="ECO:0000314"/>
    <property type="project" value="UniProtKB"/>
</dbReference>
<dbReference type="GO" id="GO:0006754">
    <property type="term" value="P:ATP biosynthetic process"/>
    <property type="evidence" value="ECO:0000314"/>
    <property type="project" value="UniProtKB"/>
</dbReference>
<dbReference type="GO" id="GO:0045333">
    <property type="term" value="P:cellular respiration"/>
    <property type="evidence" value="ECO:0000314"/>
    <property type="project" value="UniProtKB"/>
</dbReference>
<dbReference type="GO" id="GO:0006094">
    <property type="term" value="P:gluconeogenesis"/>
    <property type="evidence" value="ECO:0007669"/>
    <property type="project" value="Ensembl"/>
</dbReference>
<dbReference type="GO" id="GO:0015813">
    <property type="term" value="P:L-glutamate transmembrane transport"/>
    <property type="evidence" value="ECO:0000314"/>
    <property type="project" value="UniProtKB"/>
</dbReference>
<dbReference type="GO" id="GO:0043490">
    <property type="term" value="P:malate-aspartate shuttle"/>
    <property type="evidence" value="ECO:0000314"/>
    <property type="project" value="UniProtKB"/>
</dbReference>
<dbReference type="GO" id="GO:0006839">
    <property type="term" value="P:mitochondrial transport"/>
    <property type="evidence" value="ECO:0000303"/>
    <property type="project" value="UniProtKB"/>
</dbReference>
<dbReference type="GO" id="GO:0051592">
    <property type="term" value="P:response to calcium ion"/>
    <property type="evidence" value="ECO:0000314"/>
    <property type="project" value="UniProtKB"/>
</dbReference>
<dbReference type="FunFam" id="1.50.40.10:FF:000004">
    <property type="entry name" value="Calcium-binding mitochondrial carrier protein Aralar1"/>
    <property type="match status" value="1"/>
</dbReference>
<dbReference type="FunFam" id="1.10.238.10:FF:000064">
    <property type="entry name" value="calcium-binding mitochondrial carrier protein Aralar1 isoform X1"/>
    <property type="match status" value="1"/>
</dbReference>
<dbReference type="FunFam" id="1.10.238.10:FF:000529">
    <property type="entry name" value="Solute carrier family 25 member 13"/>
    <property type="match status" value="1"/>
</dbReference>
<dbReference type="Gene3D" id="1.10.238.10">
    <property type="entry name" value="EF-hand"/>
    <property type="match status" value="2"/>
</dbReference>
<dbReference type="Gene3D" id="1.50.40.10">
    <property type="entry name" value="Mitochondrial carrier domain"/>
    <property type="match status" value="1"/>
</dbReference>
<dbReference type="InterPro" id="IPR011992">
    <property type="entry name" value="EF-hand-dom_pair"/>
</dbReference>
<dbReference type="InterPro" id="IPR002048">
    <property type="entry name" value="EF_hand_dom"/>
</dbReference>
<dbReference type="InterPro" id="IPR002067">
    <property type="entry name" value="Mit_carrier"/>
</dbReference>
<dbReference type="InterPro" id="IPR051028">
    <property type="entry name" value="Mito_Solute_Carrier"/>
</dbReference>
<dbReference type="InterPro" id="IPR018108">
    <property type="entry name" value="Mitochondrial_sb/sol_carrier"/>
</dbReference>
<dbReference type="InterPro" id="IPR023395">
    <property type="entry name" value="Mt_carrier_dom_sf"/>
</dbReference>
<dbReference type="PANTHER" id="PTHR45678:SF12">
    <property type="entry name" value="ELECTROGENIC ASPARTATE_GLUTAMATE ANTIPORTER SLC25A13, MITOCHONDRIAL"/>
    <property type="match status" value="1"/>
</dbReference>
<dbReference type="PANTHER" id="PTHR45678">
    <property type="entry name" value="MITOCHONDRIAL 2-OXODICARBOXYLATE CARRIER 1-RELATED"/>
    <property type="match status" value="1"/>
</dbReference>
<dbReference type="Pfam" id="PF00153">
    <property type="entry name" value="Mito_carr"/>
    <property type="match status" value="3"/>
</dbReference>
<dbReference type="PRINTS" id="PR00926">
    <property type="entry name" value="MITOCARRIER"/>
</dbReference>
<dbReference type="SUPFAM" id="SSF47473">
    <property type="entry name" value="EF-hand"/>
    <property type="match status" value="2"/>
</dbReference>
<dbReference type="SUPFAM" id="SSF103506">
    <property type="entry name" value="Mitochondrial carrier"/>
    <property type="match status" value="1"/>
</dbReference>
<dbReference type="PROSITE" id="PS50222">
    <property type="entry name" value="EF_HAND_2"/>
    <property type="match status" value="2"/>
</dbReference>
<dbReference type="PROSITE" id="PS50920">
    <property type="entry name" value="SOLCAR"/>
    <property type="match status" value="3"/>
</dbReference>
<accession>Q9UJS0</accession>
<accession>O14566</accession>
<accession>O14575</accession>
<accession>Q546F9</accession>
<accession>Q9NZW1</accession>
<accession>Q9UNI7</accession>
<proteinExistence type="evidence at protein level"/>
<feature type="initiator methionine" description="Removed" evidence="21 24">
    <location>
        <position position="1"/>
    </location>
</feature>
<feature type="chain" id="PRO_0000090600" description="Electrogenic aspartate/glutamate antiporter SLC25A13, mitochondrial">
    <location>
        <begin position="2"/>
        <end position="675"/>
    </location>
</feature>
<feature type="topological domain" description="Mitochondrial intermembrane" evidence="9">
    <location>
        <begin position="2"/>
        <end position="331"/>
    </location>
</feature>
<feature type="transmembrane region" description="Helical; Name=1" evidence="2">
    <location>
        <begin position="332"/>
        <end position="349"/>
    </location>
</feature>
<feature type="topological domain" description="Mitochondrial matrix" evidence="17">
    <location>
        <begin position="350"/>
        <end position="392"/>
    </location>
</feature>
<feature type="transmembrane region" description="Helical; Name=2" evidence="2">
    <location>
        <begin position="393"/>
        <end position="412"/>
    </location>
</feature>
<feature type="topological domain" description="Mitochondrial intermembrane" evidence="17">
    <location>
        <begin position="413"/>
        <end position="435"/>
    </location>
</feature>
<feature type="transmembrane region" description="Helical; Name=3" evidence="2">
    <location>
        <begin position="436"/>
        <end position="449"/>
    </location>
</feature>
<feature type="topological domain" description="Mitochondrial matrix" evidence="17">
    <location>
        <begin position="450"/>
        <end position="484"/>
    </location>
</feature>
<feature type="transmembrane region" description="Helical; Name=4" evidence="2">
    <location>
        <begin position="485"/>
        <end position="504"/>
    </location>
</feature>
<feature type="topological domain" description="Mitochondrial intermembrane" evidence="17">
    <location>
        <begin position="505"/>
        <end position="523"/>
    </location>
</feature>
<feature type="transmembrane region" description="Helical; Name=5" evidence="2">
    <location>
        <begin position="524"/>
        <end position="541"/>
    </location>
</feature>
<feature type="topological domain" description="Mitochondrial matrix" evidence="17">
    <location>
        <begin position="542"/>
        <end position="580"/>
    </location>
</feature>
<feature type="transmembrane region" description="Helical; Name=6" evidence="2">
    <location>
        <begin position="581"/>
        <end position="600"/>
    </location>
</feature>
<feature type="topological domain" description="Mitochondrial intermembrane" evidence="17">
    <location>
        <begin position="601"/>
        <end position="675"/>
    </location>
</feature>
<feature type="domain" description="EF-hand 1" evidence="16">
    <location>
        <begin position="51"/>
        <end position="86"/>
    </location>
</feature>
<feature type="domain" description="EF-hand 2" evidence="5">
    <location>
        <begin position="87"/>
        <end position="122"/>
    </location>
</feature>
<feature type="domain" description="EF-hand 3" evidence="16">
    <location>
        <begin position="125"/>
        <end position="157"/>
    </location>
</feature>
<feature type="domain" description="EF-hand 4" evidence="5">
    <location>
        <begin position="158"/>
        <end position="193"/>
    </location>
</feature>
<feature type="repeat" description="Solcar 1" evidence="4">
    <location>
        <begin position="326"/>
        <end position="418"/>
    </location>
</feature>
<feature type="repeat" description="Solcar 2" evidence="4">
    <location>
        <begin position="426"/>
        <end position="510"/>
    </location>
</feature>
<feature type="repeat" description="Solcar 3" evidence="4">
    <location>
        <begin position="518"/>
        <end position="606"/>
    </location>
</feature>
<feature type="region of interest" description="Regulatory N-terminal domain" evidence="15">
    <location>
        <begin position="2"/>
        <end position="295"/>
    </location>
</feature>
<feature type="region of interest" description="Linker loop domain" evidence="2">
    <location>
        <begin position="296"/>
        <end position="311"/>
    </location>
</feature>
<feature type="region of interest" description="Carrier domain" evidence="15">
    <location>
        <begin position="321"/>
        <end position="612"/>
    </location>
</feature>
<feature type="region of interest" description="C-terminal domain" evidence="15">
    <location>
        <begin position="613"/>
        <end position="675"/>
    </location>
</feature>
<feature type="binding site" evidence="11 20">
    <location>
        <position position="66"/>
    </location>
    <ligand>
        <name>Ca(2+)</name>
        <dbReference type="ChEBI" id="CHEBI:29108"/>
    </ligand>
</feature>
<feature type="binding site" evidence="11 20">
    <location>
        <position position="68"/>
    </location>
    <ligand>
        <name>Ca(2+)</name>
        <dbReference type="ChEBI" id="CHEBI:29108"/>
    </ligand>
</feature>
<feature type="binding site" evidence="11 20">
    <location>
        <position position="70"/>
    </location>
    <ligand>
        <name>Ca(2+)</name>
        <dbReference type="ChEBI" id="CHEBI:29108"/>
    </ligand>
</feature>
<feature type="binding site" evidence="11 20">
    <location>
        <position position="72"/>
    </location>
    <ligand>
        <name>Ca(2+)</name>
        <dbReference type="ChEBI" id="CHEBI:29108"/>
    </ligand>
</feature>
<feature type="binding site" evidence="11 20">
    <location>
        <position position="77"/>
    </location>
    <ligand>
        <name>Ca(2+)</name>
        <dbReference type="ChEBI" id="CHEBI:29108"/>
    </ligand>
</feature>
<feature type="modified residue" description="N-acetylalanine" evidence="21 24">
    <location>
        <position position="2"/>
    </location>
</feature>
<feature type="modified residue" description="N6-acetyllysine" evidence="3">
    <location>
        <position position="353"/>
    </location>
</feature>
<feature type="modified residue" description="N6-acetyllysine" evidence="3">
    <location>
        <position position="372"/>
    </location>
</feature>
<feature type="modified residue" description="N6-methyllysine" evidence="23">
    <location>
        <position position="453"/>
    </location>
</feature>
<feature type="modified residue" description="N6-acetyllysine; alternate" evidence="3">
    <location>
        <position position="484"/>
    </location>
</feature>
<feature type="modified residue" description="N6-succinyllysine; alternate" evidence="3">
    <location>
        <position position="484"/>
    </location>
</feature>
<feature type="modified residue" description="N6-succinyllysine" evidence="3">
    <location>
        <position position="580"/>
    </location>
</feature>
<feature type="modified residue" description="N6-acetyllysine" evidence="3">
    <location>
        <position position="662"/>
    </location>
</feature>
<feature type="modified residue" description="Phosphoserine" evidence="22">
    <location>
        <position position="666"/>
    </location>
</feature>
<feature type="splice variant" id="VSP_043747" description="In isoform 2." evidence="14">
    <original>Q</original>
    <variation>QQ</variation>
    <location>
        <position position="311"/>
    </location>
</feature>
<feature type="sequence variant" id="VAR_050126" description="In dbSNP:rs1131697.">
    <original>E</original>
    <variation>K</variation>
    <location>
        <position position="141"/>
    </location>
</feature>
<feature type="sequence variant" id="VAR_050127" description="In dbSNP:rs10255762.">
    <original>L</original>
    <variation>I</variation>
    <location>
        <position position="232"/>
    </location>
</feature>
<feature type="sequence variant" id="VAR_016601" description="In NICCD; dbSNP:rs80338727." evidence="10">
    <original>E</original>
    <variation>K</variation>
    <location>
        <position position="601"/>
    </location>
</feature>
<feature type="sequence conflict" description="In Ref. 2; CAB62206." evidence="16" ref="2">
    <original>EL</original>
    <variation>VH</variation>
    <location>
        <begin position="231"/>
        <end position="232"/>
    </location>
</feature>
<feature type="sequence conflict" description="In Ref. 2; CAB62206." evidence="16" ref="2">
    <original>M</original>
    <variation>T</variation>
    <location>
        <position position="532"/>
    </location>
</feature>
<feature type="helix" evidence="25">
    <location>
        <begin position="14"/>
        <end position="24"/>
    </location>
</feature>
<feature type="strand" evidence="25">
    <location>
        <begin position="27"/>
        <end position="29"/>
    </location>
</feature>
<feature type="strand" evidence="25">
    <location>
        <begin position="32"/>
        <end position="35"/>
    </location>
</feature>
<feature type="helix" evidence="25">
    <location>
        <begin position="37"/>
        <end position="40"/>
    </location>
</feature>
<feature type="turn" evidence="25">
    <location>
        <begin position="41"/>
        <end position="44"/>
    </location>
</feature>
<feature type="helix" evidence="25">
    <location>
        <begin position="55"/>
        <end position="65"/>
    </location>
</feature>
<feature type="strand" evidence="25">
    <location>
        <begin position="70"/>
        <end position="73"/>
    </location>
</feature>
<feature type="helix" evidence="25">
    <location>
        <begin position="75"/>
        <end position="86"/>
    </location>
</feature>
<feature type="helix" evidence="25">
    <location>
        <begin position="90"/>
        <end position="99"/>
    </location>
</feature>
<feature type="helix" evidence="25">
    <location>
        <begin position="109"/>
        <end position="118"/>
    </location>
</feature>
<feature type="helix" evidence="25">
    <location>
        <begin position="120"/>
        <end position="124"/>
    </location>
</feature>
<feature type="helix" evidence="25">
    <location>
        <begin position="132"/>
        <end position="138"/>
    </location>
</feature>
<feature type="turn" evidence="25">
    <location>
        <begin position="139"/>
        <end position="142"/>
    </location>
</feature>
<feature type="helix" evidence="25">
    <location>
        <begin position="148"/>
        <end position="170"/>
    </location>
</feature>
<feature type="strand" evidence="25">
    <location>
        <begin position="175"/>
        <end position="179"/>
    </location>
</feature>
<feature type="helix" evidence="25">
    <location>
        <begin position="180"/>
        <end position="190"/>
    </location>
</feature>
<feature type="helix" evidence="25">
    <location>
        <begin position="192"/>
        <end position="194"/>
    </location>
</feature>
<feature type="helix" evidence="25">
    <location>
        <begin position="197"/>
        <end position="208"/>
    </location>
</feature>
<feature type="strand" evidence="25">
    <location>
        <begin position="213"/>
        <end position="216"/>
    </location>
</feature>
<feature type="helix" evidence="25">
    <location>
        <begin position="217"/>
        <end position="228"/>
    </location>
</feature>
<feature type="helix" evidence="25">
    <location>
        <begin position="230"/>
        <end position="241"/>
    </location>
</feature>
<feature type="helix" evidence="25">
    <location>
        <begin position="251"/>
        <end position="258"/>
    </location>
</feature>
<feature type="helix" evidence="25">
    <location>
        <begin position="266"/>
        <end position="279"/>
    </location>
</feature>
<feature type="strand" evidence="25">
    <location>
        <begin position="283"/>
        <end position="285"/>
    </location>
</feature>
<feature type="helix" evidence="25">
    <location>
        <begin position="287"/>
        <end position="293"/>
    </location>
</feature>
<feature type="helix" evidence="25">
    <location>
        <begin position="371"/>
        <end position="373"/>
    </location>
</feature>
<feature type="helix" evidence="25">
    <location>
        <begin position="374"/>
        <end position="381"/>
    </location>
</feature>
<feature type="helix" evidence="25">
    <location>
        <begin position="385"/>
        <end position="388"/>
    </location>
</feature>
<sequence>MAAAKVALTKRADPAELRTIFLKYASIEKNGEFFMSPNDFVTRYLNIFGESQPNPKTVELLSGVVDQTKDGLISFQEFVAFESVLCAPDALFMVAFQLFDKAGKGEVTFEDVKQVFGQTTIHQHIPFNWDSEFVQLHFGKERKRHLTYAEFTQFLLEIQLEHAKQAFVQRDNARTGRVTAIDFRDIMVTIRPHVLTPFVEECLVAAAGGTTSHQVSFSYFNGFNSLLNNMELIRKIYSTLAGTRKDVEVTKEEFVLAAQKFGQVTPMEVDILFQLADLYEPRGRMTLADIERIAPLEEGTLPFNLAEAQRQKASGDSARPVLLQVAESAYRFGLGSVAGAVGATAVYPIDLVKTRMQNQRSTGSFVGELMYKNSFDCFKKVLRYEGFFGLYRGLLPQLLGVAPEKAIKLTVNDFVRDKFMHKDGSVPLAAEILAGGCAGGSQVIFTNPLEIVKIRLQVAGEITTGPRVSALSVVRDLGFFGIYKGAKACFLRDIPFSAIYFPCYAHVKASFANEDGQVSPGSLLLAGAIAGMPAASLVTPADVIKTRLQVAARAGQTTYSGVIDCFRKILREEGPKALWKGAGARVFRSSPQFGVTLLTYELLQRWFYIDFGGVKPMGSEPVPKSRINLPAPNPDHVGGYKLAVATFAGIENKFGLYLPLFKPSVSTSKAIGGGP</sequence>
<name>S2513_HUMAN</name>
<gene>
    <name evidence="18" type="primary">SLC25A13</name>
</gene>
<comment type="function">
    <text evidence="9 12">Mitochondrial electrogenic aspartate/glutamate antiporter that favors efflux of aspartate and entry of glutamate and proton within the mitochondria as part of the malate-aspartate shuttle (PubMed:11566871, PubMed:38945283). Also mediates the uptake of L-cysteinesulfinate (3-sulfino-L-alanine) by mitochondria in exchange of L-glutamate and proton (PubMed:11566871). Can also exchange L-cysteinesulfinate with aspartate in their anionic form without any proton translocation (PubMed:11566871). Lacks transport activity towards gamma-aminobutyric acid (GABA) (PubMed:38945283).</text>
</comment>
<comment type="catalytic activity">
    <reaction evidence="9 12">
        <text>L-aspartate(in) + L-glutamate(out) + H(+)(out) = L-aspartate(out) + L-glutamate(in) + H(+)(in)</text>
        <dbReference type="Rhea" id="RHEA:70783"/>
        <dbReference type="ChEBI" id="CHEBI:15378"/>
        <dbReference type="ChEBI" id="CHEBI:29985"/>
        <dbReference type="ChEBI" id="CHEBI:29991"/>
    </reaction>
</comment>
<comment type="catalytic activity">
    <reaction evidence="9">
        <text>3-sulfino-L-alanine(out) + L-glutamate(in) + H(+)(in) = 3-sulfino-L-alanine(in) + L-glutamate(out) + H(+)(out)</text>
        <dbReference type="Rhea" id="RHEA:70967"/>
        <dbReference type="ChEBI" id="CHEBI:15378"/>
        <dbReference type="ChEBI" id="CHEBI:29985"/>
        <dbReference type="ChEBI" id="CHEBI:61085"/>
    </reaction>
</comment>
<comment type="catalytic activity">
    <reaction evidence="1">
        <text>3-sulfino-L-alanine(out) + L-aspartate(in) = 3-sulfino-L-alanine(in) + L-aspartate(out)</text>
        <dbReference type="Rhea" id="RHEA:70975"/>
        <dbReference type="ChEBI" id="CHEBI:29991"/>
        <dbReference type="ChEBI" id="CHEBI:61085"/>
    </reaction>
</comment>
<comment type="activity regulation">
    <text evidence="9">Activated by calcium-binding in the mitochondrial intermembrane space (PubMed:11566871). Inhibited by pyridoxal 5'-phosphate, bathophenathroline, mercurials, diethyl pyrocarbonate and N-ethylmaleimide (PubMed:11566871).</text>
</comment>
<comment type="biophysicochemical properties">
    <kinetics>
        <Vmax evidence="9">80.3 umol/min/g enzyme toward L-aspartate</Vmax>
    </kinetics>
</comment>
<comment type="subunit">
    <text evidence="11">Homodimer (via N-terminus).</text>
</comment>
<comment type="interaction">
    <interactant intactId="EBI-1222503">
        <id>Q9UJS0</id>
    </interactant>
    <interactant intactId="EBI-1047585">
        <id>O75746</id>
        <label>SLC25A12</label>
    </interactant>
    <organismsDiffer>false</organismsDiffer>
    <experiments>2</experiments>
</comment>
<comment type="subcellular location">
    <subcellularLocation>
        <location evidence="8 9">Mitochondrion inner membrane</location>
        <topology evidence="9">Multi-pass membrane protein</topology>
    </subcellularLocation>
</comment>
<comment type="alternative products">
    <event type="alternative splicing"/>
    <isoform>
        <id>Q9UJS0-1</id>
        <name>1</name>
        <sequence type="displayed"/>
    </isoform>
    <isoform>
        <id>Q9UJS0-2</id>
        <name>2</name>
        <sequence type="described" ref="VSP_043747"/>
    </isoform>
</comment>
<comment type="tissue specificity">
    <text evidence="6 8">High levels in liver and low levels in kidney, pancreas, placenta, heart and brain.</text>
</comment>
<comment type="domain">
    <text evidence="2 11">The EF-hand 2 domain within the regulatory N-terminal domain binds one calcium in the mitochondrial intermembrane space. Calcium triggers the binding of the regulatory N-terminal domain to the C-terminal domain, opening a vestibule which allows the substrates to be translocated through the carrier domain (PubMed:25410934). In the absence of calcium, the linker loop domain may close the vestibule and prevent substrates from entering the carrier domain (By similarity).</text>
</comment>
<comment type="disease" evidence="6 7">
    <disease id="DI-00310">
        <name>Citrullinemia 2</name>
        <acronym>CTLN2</acronym>
        <description>A form of citrullinemia, an autosomal recessive disease characterized primarily by elevated serum and urine citrulline levels. Ammonia intoxication is another manifestation. Citrullinemia type 2 is characterized by neuropsychiatric symptoms including abnormal behaviors, loss of memory, seizures and coma. Death can result from brain edema. Onset is sudden and usually between the ages of 20 and 50 years.</description>
        <dbReference type="MIM" id="603471"/>
    </disease>
    <text>The disease is caused by variants affecting the gene represented in this entry.</text>
</comment>
<comment type="disease" evidence="10">
    <disease id="DI-00799">
        <name>Cholestasis, neonatal intrahepatic, caused by citrin deficiency</name>
        <acronym>NICCD</acronym>
        <description>A form of citrullinemia type 2 with neonatal onset, characterized by suppression of the bile flow, hepatic fibrosis, low birth weight, growth retardation, hypoproteinemia, variable liver dysfunction. Neonatal intrahepatic cholestasis due to citrin deficiency is generally not severe and symptoms disappear by one year of age with an appropriate diet. Years or even decades later, however, some individuals develop the characteristic features of citrullinemia type 2 with neuropsychiatric symptoms.</description>
        <dbReference type="MIM" id="605814"/>
    </disease>
    <text>The disease is caused by variants affecting the gene represented in this entry.</text>
</comment>
<comment type="similarity">
    <text evidence="16">Belongs to the mitochondrial carrier (TC 2.A.29) family.</text>
</comment>
<comment type="sequence caution" evidence="16">
    <conflict type="erroneous gene model prediction">
        <sequence resource="EMBL-CDS" id="AAB67049"/>
    </conflict>
</comment>
<comment type="sequence caution" evidence="16">
    <conflict type="erroneous gene model prediction">
        <sequence resource="EMBL-CDS" id="AAB70112"/>
    </conflict>
</comment>
<protein>
    <recommendedName>
        <fullName evidence="17">Electrogenic aspartate/glutamate antiporter SLC25A13, mitochondrial</fullName>
    </recommendedName>
    <alternativeName>
        <fullName>Calcium-binding mitochondrial carrier protein Aralar2</fullName>
        <shortName evidence="13">ARALAR-related gene 2</shortName>
        <shortName evidence="13">ARALAR2</shortName>
    </alternativeName>
    <alternativeName>
        <fullName evidence="13">Citrin</fullName>
    </alternativeName>
    <alternativeName>
        <fullName>Mitochondrial aspartate glutamate carrier 2</fullName>
    </alternativeName>
    <alternativeName>
        <fullName evidence="18">Solute carrier family 25 member 13</fullName>
    </alternativeName>
</protein>
<reference key="1">
    <citation type="journal article" date="1999" name="Nat. Genet.">
        <title>The gene mutated in adult-onset type II citrullinaemia encodes a putative mitochondrial carrier protein.</title>
        <authorList>
            <person name="Kobayashi K."/>
            <person name="Sinasac D.S."/>
            <person name="Iijima M."/>
            <person name="Boright A.P."/>
            <person name="Begum L."/>
            <person name="Lee J.R."/>
            <person name="Yasuda T."/>
            <person name="Ikeda S."/>
            <person name="Hirano R."/>
            <person name="Terazono H."/>
            <person name="Crackower M.A."/>
            <person name="Kondo I."/>
            <person name="Tsui L.-C."/>
            <person name="Scherer S.W."/>
            <person name="Saheki T."/>
        </authorList>
    </citation>
    <scope>NUCLEOTIDE SEQUENCE [GENOMIC DNA / MRNA] (ISOFORM 1)</scope>
    <scope>INVOLVEMENT IN CTLN2</scope>
    <scope>TISSUE SPECIFICITY</scope>
</reference>
<reference key="2">
    <citation type="journal article" date="2000" name="Biochem. J.">
        <title>Characterization of a second member of the subfamily of calcium-binding mitochondrial carriers expressed in human non-excitable tissues.</title>
        <authorList>
            <person name="Del Arco A."/>
            <person name="Agudo M."/>
            <person name="Satrustegui J."/>
        </authorList>
    </citation>
    <scope>NUCLEOTIDE SEQUENCE [MRNA] (ISOFORM 1)</scope>
    <scope>TISSUE SPECIFICITY</scope>
    <scope>SUBCELLULAR LOCATION</scope>
    <scope>CALCIUM-BINDING</scope>
    <source>
        <tissue>Liver</tissue>
    </source>
</reference>
<reference key="3">
    <citation type="journal article" date="2001" name="EMBO J.">
        <title>Citrin and aralar1 are Ca(2+)-stimulated aspartate/glutamate transporters in mitochondria.</title>
        <authorList>
            <person name="Palmieri L."/>
            <person name="Pardo B."/>
            <person name="Lasorsa F.M."/>
            <person name="del Arco A."/>
            <person name="Kobayashi K."/>
            <person name="Iijima M."/>
            <person name="Runswick M.J."/>
            <person name="Walker J.E."/>
            <person name="Saheki T."/>
            <person name="Satrustegui J."/>
            <person name="Palmieri F."/>
        </authorList>
    </citation>
    <scope>NUCLEOTIDE SEQUENCE [MRNA] (ISOFORM 2)</scope>
    <scope>FUNCTION</scope>
    <scope>TRANSPORTER ACTIVITY</scope>
    <scope>BIOPHYSICOCHEMICAL PROPERTIES</scope>
    <scope>SUBCELLULAR LOCATION</scope>
    <scope>TOPOLOGY</scope>
</reference>
<reference key="4">
    <citation type="journal article" date="2003" name="Nature">
        <title>The DNA sequence of human chromosome 7.</title>
        <authorList>
            <person name="Hillier L.W."/>
            <person name="Fulton R.S."/>
            <person name="Fulton L.A."/>
            <person name="Graves T.A."/>
            <person name="Pepin K.H."/>
            <person name="Wagner-McPherson C."/>
            <person name="Layman D."/>
            <person name="Maas J."/>
            <person name="Jaeger S."/>
            <person name="Walker R."/>
            <person name="Wylie K."/>
            <person name="Sekhon M."/>
            <person name="Becker M.C."/>
            <person name="O'Laughlin M.D."/>
            <person name="Schaller M.E."/>
            <person name="Fewell G.A."/>
            <person name="Delehaunty K.D."/>
            <person name="Miner T.L."/>
            <person name="Nash W.E."/>
            <person name="Cordes M."/>
            <person name="Du H."/>
            <person name="Sun H."/>
            <person name="Edwards J."/>
            <person name="Bradshaw-Cordum H."/>
            <person name="Ali J."/>
            <person name="Andrews S."/>
            <person name="Isak A."/>
            <person name="Vanbrunt A."/>
            <person name="Nguyen C."/>
            <person name="Du F."/>
            <person name="Lamar B."/>
            <person name="Courtney L."/>
            <person name="Kalicki J."/>
            <person name="Ozersky P."/>
            <person name="Bielicki L."/>
            <person name="Scott K."/>
            <person name="Holmes A."/>
            <person name="Harkins R."/>
            <person name="Harris A."/>
            <person name="Strong C.M."/>
            <person name="Hou S."/>
            <person name="Tomlinson C."/>
            <person name="Dauphin-Kohlberg S."/>
            <person name="Kozlowicz-Reilly A."/>
            <person name="Leonard S."/>
            <person name="Rohlfing T."/>
            <person name="Rock S.M."/>
            <person name="Tin-Wollam A.-M."/>
            <person name="Abbott A."/>
            <person name="Minx P."/>
            <person name="Maupin R."/>
            <person name="Strowmatt C."/>
            <person name="Latreille P."/>
            <person name="Miller N."/>
            <person name="Johnson D."/>
            <person name="Murray J."/>
            <person name="Woessner J.P."/>
            <person name="Wendl M.C."/>
            <person name="Yang S.-P."/>
            <person name="Schultz B.R."/>
            <person name="Wallis J.W."/>
            <person name="Spieth J."/>
            <person name="Bieri T.A."/>
            <person name="Nelson J.O."/>
            <person name="Berkowicz N."/>
            <person name="Wohldmann P.E."/>
            <person name="Cook L.L."/>
            <person name="Hickenbotham M.T."/>
            <person name="Eldred J."/>
            <person name="Williams D."/>
            <person name="Bedell J.A."/>
            <person name="Mardis E.R."/>
            <person name="Clifton S.W."/>
            <person name="Chissoe S.L."/>
            <person name="Marra M.A."/>
            <person name="Raymond C."/>
            <person name="Haugen E."/>
            <person name="Gillett W."/>
            <person name="Zhou Y."/>
            <person name="James R."/>
            <person name="Phelps K."/>
            <person name="Iadanoto S."/>
            <person name="Bubb K."/>
            <person name="Simms E."/>
            <person name="Levy R."/>
            <person name="Clendenning J."/>
            <person name="Kaul R."/>
            <person name="Kent W.J."/>
            <person name="Furey T.S."/>
            <person name="Baertsch R.A."/>
            <person name="Brent M.R."/>
            <person name="Keibler E."/>
            <person name="Flicek P."/>
            <person name="Bork P."/>
            <person name="Suyama M."/>
            <person name="Bailey J.A."/>
            <person name="Portnoy M.E."/>
            <person name="Torrents D."/>
            <person name="Chinwalla A.T."/>
            <person name="Gish W.R."/>
            <person name="Eddy S.R."/>
            <person name="McPherson J.D."/>
            <person name="Olson M.V."/>
            <person name="Eichler E.E."/>
            <person name="Green E.D."/>
            <person name="Waterston R.H."/>
            <person name="Wilson R.K."/>
        </authorList>
    </citation>
    <scope>NUCLEOTIDE SEQUENCE [LARGE SCALE GENOMIC DNA]</scope>
</reference>
<reference key="5">
    <citation type="submission" date="2005-09" db="EMBL/GenBank/DDBJ databases">
        <authorList>
            <person name="Mural R.J."/>
            <person name="Istrail S."/>
            <person name="Sutton G."/>
            <person name="Florea L."/>
            <person name="Halpern A.L."/>
            <person name="Mobarry C.M."/>
            <person name="Lippert R."/>
            <person name="Walenz B."/>
            <person name="Shatkay H."/>
            <person name="Dew I."/>
            <person name="Miller J.R."/>
            <person name="Flanigan M.J."/>
            <person name="Edwards N.J."/>
            <person name="Bolanos R."/>
            <person name="Fasulo D."/>
            <person name="Halldorsson B.V."/>
            <person name="Hannenhalli S."/>
            <person name="Turner R."/>
            <person name="Yooseph S."/>
            <person name="Lu F."/>
            <person name="Nusskern D.R."/>
            <person name="Shue B.C."/>
            <person name="Zheng X.H."/>
            <person name="Zhong F."/>
            <person name="Delcher A.L."/>
            <person name="Huson D.H."/>
            <person name="Kravitz S.A."/>
            <person name="Mouchard L."/>
            <person name="Reinert K."/>
            <person name="Remington K.A."/>
            <person name="Clark A.G."/>
            <person name="Waterman M.S."/>
            <person name="Eichler E.E."/>
            <person name="Adams M.D."/>
            <person name="Hunkapiller M.W."/>
            <person name="Myers E.W."/>
            <person name="Venter J.C."/>
        </authorList>
    </citation>
    <scope>NUCLEOTIDE SEQUENCE [LARGE SCALE GENOMIC DNA]</scope>
</reference>
<reference key="6">
    <citation type="journal article" date="2004" name="Genome Res.">
        <title>The status, quality, and expansion of the NIH full-length cDNA project: the Mammalian Gene Collection (MGC).</title>
        <authorList>
            <consortium name="The MGC Project Team"/>
        </authorList>
    </citation>
    <scope>NUCLEOTIDE SEQUENCE [LARGE SCALE MRNA] (ISOFORM 1)</scope>
    <source>
        <tissue>Uterus</tissue>
    </source>
</reference>
<reference key="7">
    <citation type="journal article" date="1999" name="Genomics">
        <title>Genomic structure of the adult-onset type II citrullinemia gene, SLC25A13, and cloning and expression of its mouse homologue.</title>
        <authorList>
            <person name="Sinasac D.S."/>
            <person name="Crackower M.A."/>
            <person name="Lee J.R."/>
            <person name="Kobayashi K."/>
            <person name="Saheki T."/>
            <person name="Scherer S.W."/>
            <person name="Tsui L.-C."/>
        </authorList>
    </citation>
    <scope>NUCLEOTIDE SEQUENCE [GENOMIC DNA] OF 6-251</scope>
    <scope>INVOLVEMENT IN CTLN2</scope>
</reference>
<reference key="8">
    <citation type="journal article" date="2011" name="BMC Syst. Biol.">
        <title>Initial characterization of the human central proteome.</title>
        <authorList>
            <person name="Burkard T.R."/>
            <person name="Planyavsky M."/>
            <person name="Kaupe I."/>
            <person name="Breitwieser F.P."/>
            <person name="Buerckstuemmer T."/>
            <person name="Bennett K.L."/>
            <person name="Superti-Furga G."/>
            <person name="Colinge J."/>
        </authorList>
    </citation>
    <scope>IDENTIFICATION BY MASS SPECTROMETRY [LARGE SCALE ANALYSIS]</scope>
</reference>
<reference key="9">
    <citation type="journal article" date="2012" name="Proc. Natl. Acad. Sci. U.S.A.">
        <title>N-terminal acetylome analyses and functional insights of the N-terminal acetyltransferase NatB.</title>
        <authorList>
            <person name="Van Damme P."/>
            <person name="Lasa M."/>
            <person name="Polevoda B."/>
            <person name="Gazquez C."/>
            <person name="Elosegui-Artola A."/>
            <person name="Kim D.S."/>
            <person name="De Juan-Pardo E."/>
            <person name="Demeyer K."/>
            <person name="Hole K."/>
            <person name="Larrea E."/>
            <person name="Timmerman E."/>
            <person name="Prieto J."/>
            <person name="Arnesen T."/>
            <person name="Sherman F."/>
            <person name="Gevaert K."/>
            <person name="Aldabe R."/>
        </authorList>
    </citation>
    <scope>ACETYLATION [LARGE SCALE ANALYSIS] AT ALA-2</scope>
    <scope>CLEAVAGE OF INITIATOR METHIONINE [LARGE SCALE ANALYSIS]</scope>
    <scope>IDENTIFICATION BY MASS SPECTROMETRY [LARGE SCALE ANALYSIS]</scope>
</reference>
<reference key="10">
    <citation type="journal article" date="2013" name="J. Proteome Res.">
        <title>Toward a comprehensive characterization of a human cancer cell phosphoproteome.</title>
        <authorList>
            <person name="Zhou H."/>
            <person name="Di Palma S."/>
            <person name="Preisinger C."/>
            <person name="Peng M."/>
            <person name="Polat A.N."/>
            <person name="Heck A.J."/>
            <person name="Mohammed S."/>
        </authorList>
    </citation>
    <scope>PHOSPHORYLATION [LARGE SCALE ANALYSIS] AT SER-666</scope>
    <scope>IDENTIFICATION BY MASS SPECTROMETRY [LARGE SCALE ANALYSIS]</scope>
    <source>
        <tissue>Erythroleukemia</tissue>
    </source>
</reference>
<reference key="11">
    <citation type="journal article" date="2014" name="J. Proteomics">
        <title>An enzyme assisted RP-RPLC approach for in-depth analysis of human liver phosphoproteome.</title>
        <authorList>
            <person name="Bian Y."/>
            <person name="Song C."/>
            <person name="Cheng K."/>
            <person name="Dong M."/>
            <person name="Wang F."/>
            <person name="Huang J."/>
            <person name="Sun D."/>
            <person name="Wang L."/>
            <person name="Ye M."/>
            <person name="Zou H."/>
        </authorList>
    </citation>
    <scope>IDENTIFICATION BY MASS SPECTROMETRY [LARGE SCALE ANALYSIS]</scope>
    <source>
        <tissue>Liver</tissue>
    </source>
</reference>
<reference key="12">
    <citation type="journal article" date="2014" name="Mol. Cell. Proteomics">
        <title>Immunoaffinity enrichment and mass spectrometry analysis of protein methylation.</title>
        <authorList>
            <person name="Guo A."/>
            <person name="Gu H."/>
            <person name="Zhou J."/>
            <person name="Mulhern D."/>
            <person name="Wang Y."/>
            <person name="Lee K.A."/>
            <person name="Yang V."/>
            <person name="Aguiar M."/>
            <person name="Kornhauser J."/>
            <person name="Jia X."/>
            <person name="Ren J."/>
            <person name="Beausoleil S.A."/>
            <person name="Silva J.C."/>
            <person name="Vemulapalli V."/>
            <person name="Bedford M.T."/>
            <person name="Comb M.J."/>
        </authorList>
    </citation>
    <scope>METHYLATION [LARGE SCALE ANALYSIS] AT LYS-453</scope>
    <scope>IDENTIFICATION BY MASS SPECTROMETRY [LARGE SCALE ANALYSIS]</scope>
    <source>
        <tissue>Colon carcinoma</tissue>
    </source>
</reference>
<reference key="13">
    <citation type="journal article" date="2015" name="Proteomics">
        <title>N-terminome analysis of the human mitochondrial proteome.</title>
        <authorList>
            <person name="Vaca Jacome A.S."/>
            <person name="Rabilloud T."/>
            <person name="Schaeffer-Reiss C."/>
            <person name="Rompais M."/>
            <person name="Ayoub D."/>
            <person name="Lane L."/>
            <person name="Bairoch A."/>
            <person name="Van Dorsselaer A."/>
            <person name="Carapito C."/>
        </authorList>
    </citation>
    <scope>ACETYLATION [LARGE SCALE ANALYSIS] AT ALA-2</scope>
    <scope>CLEAVAGE OF INITIATOR METHIONINE [LARGE SCALE ANALYSIS]</scope>
    <scope>IDENTIFICATION BY MASS SPECTROMETRY [LARGE SCALE ANALYSIS]</scope>
</reference>
<reference key="14">
    <citation type="journal article" date="2024" name="Biochim. Biophys. Acta">
        <title>The mitochondrial aspartate/glutamate carrier does not transport GABA.</title>
        <authorList>
            <person name="Porcelli V."/>
            <person name="Barile S."/>
            <person name="Capobianco L."/>
            <person name="Barile S.N."/>
            <person name="Gorgoglione R."/>
            <person name="Fiermonte G."/>
            <person name="Monti B."/>
            <person name="Lasorsa F.M."/>
            <person name="Palmieri L."/>
        </authorList>
    </citation>
    <scope>FUNCTION</scope>
    <scope>TRANSPORTER ACTIVITY</scope>
    <scope>LACK OF GABA TRANSPORT ACTIVITY</scope>
</reference>
<reference key="15">
    <citation type="journal article" date="2002" name="Hum. Mutat.">
        <title>Screening of SLC25A13 mutations in early and late onset patients with citrin deficiency and in the Japanese population: identification of two novel mutations and establishment of multiple DNA diagnosis methods for nine mutations.</title>
        <authorList>
            <person name="Yamaguchi N."/>
            <person name="Kobayashi K."/>
            <person name="Yasuda T."/>
            <person name="Nishi I."/>
            <person name="Iijima M."/>
            <person name="Nakagawa M."/>
            <person name="Osame M."/>
            <person name="Kondo I."/>
            <person name="Saheki T."/>
        </authorList>
    </citation>
    <scope>VARIANT NICCD LYS-601</scope>
</reference>
<reference evidence="20" key="16">
    <citation type="journal article" date="2014" name="Nat. Commun.">
        <title>Calcium-induced conformational changes of the regulatory domain of human mitochondrial aspartate/glutamate carriers.</title>
        <authorList>
            <person name="Thangaratnarajah C."/>
            <person name="Ruprecht J.J."/>
            <person name="Kunji E.R."/>
        </authorList>
    </citation>
    <scope>X-RAY CRYSTALLOGRAPHY (2.40 ANGSTROMS) OF 2-320 AND 339-407 OF HOMODIMER IN COMPLEX WITH CALCIUM</scope>
    <scope>SUBUNIT</scope>
    <scope>CALCIUM-BINDING</scope>
    <scope>DOMAINS</scope>
</reference>